<comment type="function">
    <text evidence="1">Cell wall formation. Catalyzes the addition of glutamate to the nucleotide precursor UDP-N-acetylmuramoyl-L-alanine (UMA).</text>
</comment>
<comment type="catalytic activity">
    <reaction evidence="1">
        <text>UDP-N-acetyl-alpha-D-muramoyl-L-alanine + D-glutamate + ATP = UDP-N-acetyl-alpha-D-muramoyl-L-alanyl-D-glutamate + ADP + phosphate + H(+)</text>
        <dbReference type="Rhea" id="RHEA:16429"/>
        <dbReference type="ChEBI" id="CHEBI:15378"/>
        <dbReference type="ChEBI" id="CHEBI:29986"/>
        <dbReference type="ChEBI" id="CHEBI:30616"/>
        <dbReference type="ChEBI" id="CHEBI:43474"/>
        <dbReference type="ChEBI" id="CHEBI:83898"/>
        <dbReference type="ChEBI" id="CHEBI:83900"/>
        <dbReference type="ChEBI" id="CHEBI:456216"/>
        <dbReference type="EC" id="6.3.2.9"/>
    </reaction>
</comment>
<comment type="pathway">
    <text evidence="1">Cell wall biogenesis; peptidoglycan biosynthesis.</text>
</comment>
<comment type="subcellular location">
    <subcellularLocation>
        <location evidence="1">Cytoplasm</location>
    </subcellularLocation>
</comment>
<comment type="similarity">
    <text evidence="1">Belongs to the MurCDEF family.</text>
</comment>
<gene>
    <name evidence="1" type="primary">murD</name>
    <name type="ordered locus">CA_C3194</name>
</gene>
<accession>Q97EB9</accession>
<sequence>MKRDFNEFVKFIKNKKTAVVGMGISNRPLIHFLSKLGAEITAFDRKTKEELGDEVINEFSSENVKFELGENYLSALKGFDVVFKTPSMRIDSEALVKAKQEGAYITSEMEEFIKYCPAKIFGVTGSDGKTTTTTLIYNMLKEEGYKTWVGGNIGTPLFSKIKEVSTKDKVVLELSSFQLMTIDVSPEVAVVTNLSPNHLDIHKNMEEYINAKKNIFTHQSKGNVLIINRDNEITNNMESEALGDLLKFSRNEKVKNGAYYNKQDGNIYLFENKICNKDDIKIKGMDNVKNFMAAFCAVSKDVSKESMIKVAMNFAGVEHRREFVRELDGVKYYNDSIASSPTRTISGLNAYERPVILIAGGYDKHIPFEPLAEKGYDKIKVLILMGATKNKIKETFDKVICEKNIKLPIILSDNLEEAVCEAKKVATNGDIVTLSPACASFDSFPNFEVRGNKFKEIVNNLK</sequence>
<feature type="chain" id="PRO_0000108999" description="UDP-N-acetylmuramoylalanine--D-glutamate ligase">
    <location>
        <begin position="1"/>
        <end position="462"/>
    </location>
</feature>
<feature type="binding site" evidence="1">
    <location>
        <begin position="125"/>
        <end position="131"/>
    </location>
    <ligand>
        <name>ATP</name>
        <dbReference type="ChEBI" id="CHEBI:30616"/>
    </ligand>
</feature>
<protein>
    <recommendedName>
        <fullName evidence="1">UDP-N-acetylmuramoylalanine--D-glutamate ligase</fullName>
        <ecNumber evidence="1">6.3.2.9</ecNumber>
    </recommendedName>
    <alternativeName>
        <fullName evidence="1">D-glutamic acid-adding enzyme</fullName>
    </alternativeName>
    <alternativeName>
        <fullName evidence="1">UDP-N-acetylmuramoyl-L-alanyl-D-glutamate synthetase</fullName>
    </alternativeName>
</protein>
<dbReference type="EC" id="6.3.2.9" evidence="1"/>
<dbReference type="EMBL" id="AE001437">
    <property type="protein sequence ID" value="AAK81131.1"/>
    <property type="molecule type" value="Genomic_DNA"/>
</dbReference>
<dbReference type="PIR" id="H97292">
    <property type="entry name" value="H97292"/>
</dbReference>
<dbReference type="RefSeq" id="NP_349791.1">
    <property type="nucleotide sequence ID" value="NC_003030.1"/>
</dbReference>
<dbReference type="RefSeq" id="WP_010966471.1">
    <property type="nucleotide sequence ID" value="NC_003030.1"/>
</dbReference>
<dbReference type="SMR" id="Q97EB9"/>
<dbReference type="STRING" id="272562.CA_C3194"/>
<dbReference type="KEGG" id="cac:CA_C3194"/>
<dbReference type="PATRIC" id="fig|272562.8.peg.3374"/>
<dbReference type="eggNOG" id="COG0771">
    <property type="taxonomic scope" value="Bacteria"/>
</dbReference>
<dbReference type="HOGENOM" id="CLU_032540_0_1_9"/>
<dbReference type="OrthoDB" id="9809796at2"/>
<dbReference type="UniPathway" id="UPA00219"/>
<dbReference type="Proteomes" id="UP000000814">
    <property type="component" value="Chromosome"/>
</dbReference>
<dbReference type="GO" id="GO:0005737">
    <property type="term" value="C:cytoplasm"/>
    <property type="evidence" value="ECO:0007669"/>
    <property type="project" value="UniProtKB-SubCell"/>
</dbReference>
<dbReference type="GO" id="GO:0005524">
    <property type="term" value="F:ATP binding"/>
    <property type="evidence" value="ECO:0007669"/>
    <property type="project" value="UniProtKB-UniRule"/>
</dbReference>
<dbReference type="GO" id="GO:0008764">
    <property type="term" value="F:UDP-N-acetylmuramoylalanine-D-glutamate ligase activity"/>
    <property type="evidence" value="ECO:0007669"/>
    <property type="project" value="UniProtKB-UniRule"/>
</dbReference>
<dbReference type="GO" id="GO:0051301">
    <property type="term" value="P:cell division"/>
    <property type="evidence" value="ECO:0007669"/>
    <property type="project" value="UniProtKB-KW"/>
</dbReference>
<dbReference type="GO" id="GO:0071555">
    <property type="term" value="P:cell wall organization"/>
    <property type="evidence" value="ECO:0007669"/>
    <property type="project" value="UniProtKB-KW"/>
</dbReference>
<dbReference type="GO" id="GO:0009252">
    <property type="term" value="P:peptidoglycan biosynthetic process"/>
    <property type="evidence" value="ECO:0007669"/>
    <property type="project" value="UniProtKB-UniRule"/>
</dbReference>
<dbReference type="GO" id="GO:0008360">
    <property type="term" value="P:regulation of cell shape"/>
    <property type="evidence" value="ECO:0007669"/>
    <property type="project" value="UniProtKB-KW"/>
</dbReference>
<dbReference type="Gene3D" id="3.90.190.20">
    <property type="entry name" value="Mur ligase, C-terminal domain"/>
    <property type="match status" value="1"/>
</dbReference>
<dbReference type="Gene3D" id="3.40.1190.10">
    <property type="entry name" value="Mur-like, catalytic domain"/>
    <property type="match status" value="1"/>
</dbReference>
<dbReference type="Gene3D" id="3.40.50.720">
    <property type="entry name" value="NAD(P)-binding Rossmann-like Domain"/>
    <property type="match status" value="1"/>
</dbReference>
<dbReference type="HAMAP" id="MF_00639">
    <property type="entry name" value="MurD"/>
    <property type="match status" value="1"/>
</dbReference>
<dbReference type="InterPro" id="IPR036565">
    <property type="entry name" value="Mur-like_cat_sf"/>
</dbReference>
<dbReference type="InterPro" id="IPR004101">
    <property type="entry name" value="Mur_ligase_C"/>
</dbReference>
<dbReference type="InterPro" id="IPR036615">
    <property type="entry name" value="Mur_ligase_C_dom_sf"/>
</dbReference>
<dbReference type="InterPro" id="IPR013221">
    <property type="entry name" value="Mur_ligase_cen"/>
</dbReference>
<dbReference type="InterPro" id="IPR005762">
    <property type="entry name" value="MurD"/>
</dbReference>
<dbReference type="NCBIfam" id="TIGR01087">
    <property type="entry name" value="murD"/>
    <property type="match status" value="1"/>
</dbReference>
<dbReference type="PANTHER" id="PTHR43692">
    <property type="entry name" value="UDP-N-ACETYLMURAMOYLALANINE--D-GLUTAMATE LIGASE"/>
    <property type="match status" value="1"/>
</dbReference>
<dbReference type="PANTHER" id="PTHR43692:SF1">
    <property type="entry name" value="UDP-N-ACETYLMURAMOYLALANINE--D-GLUTAMATE LIGASE"/>
    <property type="match status" value="1"/>
</dbReference>
<dbReference type="Pfam" id="PF02875">
    <property type="entry name" value="Mur_ligase_C"/>
    <property type="match status" value="1"/>
</dbReference>
<dbReference type="Pfam" id="PF08245">
    <property type="entry name" value="Mur_ligase_M"/>
    <property type="match status" value="1"/>
</dbReference>
<dbReference type="Pfam" id="PF21799">
    <property type="entry name" value="MurD-like_N"/>
    <property type="match status" value="1"/>
</dbReference>
<dbReference type="SUPFAM" id="SSF51984">
    <property type="entry name" value="MurCD N-terminal domain"/>
    <property type="match status" value="1"/>
</dbReference>
<dbReference type="SUPFAM" id="SSF53623">
    <property type="entry name" value="MurD-like peptide ligases, catalytic domain"/>
    <property type="match status" value="1"/>
</dbReference>
<dbReference type="SUPFAM" id="SSF53244">
    <property type="entry name" value="MurD-like peptide ligases, peptide-binding domain"/>
    <property type="match status" value="1"/>
</dbReference>
<keyword id="KW-0067">ATP-binding</keyword>
<keyword id="KW-0131">Cell cycle</keyword>
<keyword id="KW-0132">Cell division</keyword>
<keyword id="KW-0133">Cell shape</keyword>
<keyword id="KW-0961">Cell wall biogenesis/degradation</keyword>
<keyword id="KW-0963">Cytoplasm</keyword>
<keyword id="KW-0436">Ligase</keyword>
<keyword id="KW-0547">Nucleotide-binding</keyword>
<keyword id="KW-0573">Peptidoglycan synthesis</keyword>
<keyword id="KW-1185">Reference proteome</keyword>
<name>MURD_CLOAB</name>
<proteinExistence type="inferred from homology"/>
<organism>
    <name type="scientific">Clostridium acetobutylicum (strain ATCC 824 / DSM 792 / JCM 1419 / IAM 19013 / LMG 5710 / NBRC 13948 / NRRL B-527 / VKM B-1787 / 2291 / W)</name>
    <dbReference type="NCBI Taxonomy" id="272562"/>
    <lineage>
        <taxon>Bacteria</taxon>
        <taxon>Bacillati</taxon>
        <taxon>Bacillota</taxon>
        <taxon>Clostridia</taxon>
        <taxon>Eubacteriales</taxon>
        <taxon>Clostridiaceae</taxon>
        <taxon>Clostridium</taxon>
    </lineage>
</organism>
<evidence type="ECO:0000255" key="1">
    <source>
        <dbReference type="HAMAP-Rule" id="MF_00639"/>
    </source>
</evidence>
<reference key="1">
    <citation type="journal article" date="2001" name="J. Bacteriol.">
        <title>Genome sequence and comparative analysis of the solvent-producing bacterium Clostridium acetobutylicum.</title>
        <authorList>
            <person name="Noelling J."/>
            <person name="Breton G."/>
            <person name="Omelchenko M.V."/>
            <person name="Makarova K.S."/>
            <person name="Zeng Q."/>
            <person name="Gibson R."/>
            <person name="Lee H.M."/>
            <person name="Dubois J."/>
            <person name="Qiu D."/>
            <person name="Hitti J."/>
            <person name="Wolf Y.I."/>
            <person name="Tatusov R.L."/>
            <person name="Sabathe F."/>
            <person name="Doucette-Stamm L.A."/>
            <person name="Soucaille P."/>
            <person name="Daly M.J."/>
            <person name="Bennett G.N."/>
            <person name="Koonin E.V."/>
            <person name="Smith D.R."/>
        </authorList>
    </citation>
    <scope>NUCLEOTIDE SEQUENCE [LARGE SCALE GENOMIC DNA]</scope>
    <source>
        <strain>ATCC 824 / DSM 792 / JCM 1419 / IAM 19013 / LMG 5710 / NBRC 13948 / NRRL B-527 / VKM B-1787 / 2291 / W</strain>
    </source>
</reference>